<organism>
    <name type="scientific">Pseudomonas fluorescens (strain SBW25)</name>
    <dbReference type="NCBI Taxonomy" id="216595"/>
    <lineage>
        <taxon>Bacteria</taxon>
        <taxon>Pseudomonadati</taxon>
        <taxon>Pseudomonadota</taxon>
        <taxon>Gammaproteobacteria</taxon>
        <taxon>Pseudomonadales</taxon>
        <taxon>Pseudomonadaceae</taxon>
        <taxon>Pseudomonas</taxon>
    </lineage>
</organism>
<proteinExistence type="inferred from homology"/>
<protein>
    <recommendedName>
        <fullName evidence="1">Holliday junction branch migration complex subunit RuvA</fullName>
    </recommendedName>
</protein>
<evidence type="ECO:0000255" key="1">
    <source>
        <dbReference type="HAMAP-Rule" id="MF_00031"/>
    </source>
</evidence>
<sequence>MIGRLRGTLAEKQPPHLILDVNGLGYELEVPMTTLYRLPSVGEPITLHTHLVVREDAQLLYGFIGKRDRDFFRELIRLNGVGPKLALALMSSLEVDELVRAVSAQDTSALTKVPGVGKKTAERLLVELKDRFKAWEVVPSMFALVPNQPDMPAGQVASAESDAVSALISLGYKPQEASKAVSAIKDKNLSSEDMIRRALKGMI</sequence>
<comment type="function">
    <text evidence="1">The RuvA-RuvB-RuvC complex processes Holliday junction (HJ) DNA during genetic recombination and DNA repair, while the RuvA-RuvB complex plays an important role in the rescue of blocked DNA replication forks via replication fork reversal (RFR). RuvA specifically binds to HJ cruciform DNA, conferring on it an open structure. The RuvB hexamer acts as an ATP-dependent pump, pulling dsDNA into and through the RuvAB complex. HJ branch migration allows RuvC to scan DNA until it finds its consensus sequence, where it cleaves and resolves the cruciform DNA.</text>
</comment>
<comment type="subunit">
    <text evidence="1">Homotetramer. Forms an RuvA(8)-RuvB(12)-Holliday junction (HJ) complex. HJ DNA is sandwiched between 2 RuvA tetramers; dsDNA enters through RuvA and exits via RuvB. An RuvB hexamer assembles on each DNA strand where it exits the tetramer. Each RuvB hexamer is contacted by two RuvA subunits (via domain III) on 2 adjacent RuvB subunits; this complex drives branch migration. In the full resolvosome a probable DNA-RuvA(4)-RuvB(12)-RuvC(2) complex forms which resolves the HJ.</text>
</comment>
<comment type="subcellular location">
    <subcellularLocation>
        <location evidence="1">Cytoplasm</location>
    </subcellularLocation>
</comment>
<comment type="domain">
    <text evidence="1">Has three domains with a flexible linker between the domains II and III and assumes an 'L' shape. Domain III is highly mobile and contacts RuvB.</text>
</comment>
<comment type="similarity">
    <text evidence="1">Belongs to the RuvA family.</text>
</comment>
<keyword id="KW-0963">Cytoplasm</keyword>
<keyword id="KW-0227">DNA damage</keyword>
<keyword id="KW-0233">DNA recombination</keyword>
<keyword id="KW-0234">DNA repair</keyword>
<keyword id="KW-0238">DNA-binding</keyword>
<name>RUVA_PSEFS</name>
<feature type="chain" id="PRO_1000201999" description="Holliday junction branch migration complex subunit RuvA">
    <location>
        <begin position="1"/>
        <end position="203"/>
    </location>
</feature>
<feature type="region of interest" description="Domain I" evidence="1">
    <location>
        <begin position="1"/>
        <end position="64"/>
    </location>
</feature>
<feature type="region of interest" description="Domain II" evidence="1">
    <location>
        <begin position="65"/>
        <end position="143"/>
    </location>
</feature>
<feature type="region of interest" description="Flexible linker" evidence="1">
    <location>
        <begin position="144"/>
        <end position="154"/>
    </location>
</feature>
<feature type="region of interest" description="Domain III" evidence="1">
    <location>
        <begin position="155"/>
        <end position="203"/>
    </location>
</feature>
<gene>
    <name evidence="1" type="primary">ruvA</name>
    <name type="ordered locus">PFLU_4914</name>
</gene>
<reference key="1">
    <citation type="journal article" date="2009" name="Genome Biol.">
        <title>Genomic and genetic analyses of diversity and plant interactions of Pseudomonas fluorescens.</title>
        <authorList>
            <person name="Silby M.W."/>
            <person name="Cerdeno-Tarraga A.M."/>
            <person name="Vernikos G.S."/>
            <person name="Giddens S.R."/>
            <person name="Jackson R.W."/>
            <person name="Preston G.M."/>
            <person name="Zhang X.-X."/>
            <person name="Moon C.D."/>
            <person name="Gehrig S.M."/>
            <person name="Godfrey S.A.C."/>
            <person name="Knight C.G."/>
            <person name="Malone J.G."/>
            <person name="Robinson Z."/>
            <person name="Spiers A.J."/>
            <person name="Harris S."/>
            <person name="Challis G.L."/>
            <person name="Yaxley A.M."/>
            <person name="Harris D."/>
            <person name="Seeger K."/>
            <person name="Murphy L."/>
            <person name="Rutter S."/>
            <person name="Squares R."/>
            <person name="Quail M.A."/>
            <person name="Saunders E."/>
            <person name="Mavromatis K."/>
            <person name="Brettin T.S."/>
            <person name="Bentley S.D."/>
            <person name="Hothersall J."/>
            <person name="Stephens E."/>
            <person name="Thomas C.M."/>
            <person name="Parkhill J."/>
            <person name="Levy S.B."/>
            <person name="Rainey P.B."/>
            <person name="Thomson N.R."/>
        </authorList>
    </citation>
    <scope>NUCLEOTIDE SEQUENCE [LARGE SCALE GENOMIC DNA]</scope>
    <source>
        <strain>SBW25</strain>
    </source>
</reference>
<accession>C3JYS8</accession>
<dbReference type="EMBL" id="AM181176">
    <property type="protein sequence ID" value="CAY51821.1"/>
    <property type="molecule type" value="Genomic_DNA"/>
</dbReference>
<dbReference type="RefSeq" id="WP_003175802.1">
    <property type="nucleotide sequence ID" value="NC_012660.1"/>
</dbReference>
<dbReference type="SMR" id="C3JYS8"/>
<dbReference type="STRING" id="294.SRM1_04345"/>
<dbReference type="GeneID" id="93501675"/>
<dbReference type="eggNOG" id="COG0632">
    <property type="taxonomic scope" value="Bacteria"/>
</dbReference>
<dbReference type="HOGENOM" id="CLU_087936_0_0_6"/>
<dbReference type="OrthoDB" id="5293449at2"/>
<dbReference type="GO" id="GO:0005737">
    <property type="term" value="C:cytoplasm"/>
    <property type="evidence" value="ECO:0007669"/>
    <property type="project" value="UniProtKB-SubCell"/>
</dbReference>
<dbReference type="GO" id="GO:0009379">
    <property type="term" value="C:Holliday junction helicase complex"/>
    <property type="evidence" value="ECO:0007669"/>
    <property type="project" value="InterPro"/>
</dbReference>
<dbReference type="GO" id="GO:0048476">
    <property type="term" value="C:Holliday junction resolvase complex"/>
    <property type="evidence" value="ECO:0007669"/>
    <property type="project" value="UniProtKB-UniRule"/>
</dbReference>
<dbReference type="GO" id="GO:0005524">
    <property type="term" value="F:ATP binding"/>
    <property type="evidence" value="ECO:0007669"/>
    <property type="project" value="InterPro"/>
</dbReference>
<dbReference type="GO" id="GO:0000400">
    <property type="term" value="F:four-way junction DNA binding"/>
    <property type="evidence" value="ECO:0007669"/>
    <property type="project" value="UniProtKB-UniRule"/>
</dbReference>
<dbReference type="GO" id="GO:0009378">
    <property type="term" value="F:four-way junction helicase activity"/>
    <property type="evidence" value="ECO:0007669"/>
    <property type="project" value="InterPro"/>
</dbReference>
<dbReference type="GO" id="GO:0006310">
    <property type="term" value="P:DNA recombination"/>
    <property type="evidence" value="ECO:0007669"/>
    <property type="project" value="UniProtKB-UniRule"/>
</dbReference>
<dbReference type="GO" id="GO:0006281">
    <property type="term" value="P:DNA repair"/>
    <property type="evidence" value="ECO:0007669"/>
    <property type="project" value="UniProtKB-UniRule"/>
</dbReference>
<dbReference type="CDD" id="cd14332">
    <property type="entry name" value="UBA_RuvA_C"/>
    <property type="match status" value="1"/>
</dbReference>
<dbReference type="Gene3D" id="1.10.150.20">
    <property type="entry name" value="5' to 3' exonuclease, C-terminal subdomain"/>
    <property type="match status" value="1"/>
</dbReference>
<dbReference type="Gene3D" id="1.10.8.10">
    <property type="entry name" value="DNA helicase RuvA subunit, C-terminal domain"/>
    <property type="match status" value="1"/>
</dbReference>
<dbReference type="Gene3D" id="2.40.50.140">
    <property type="entry name" value="Nucleic acid-binding proteins"/>
    <property type="match status" value="1"/>
</dbReference>
<dbReference type="HAMAP" id="MF_00031">
    <property type="entry name" value="DNA_HJ_migration_RuvA"/>
    <property type="match status" value="1"/>
</dbReference>
<dbReference type="InterPro" id="IPR013849">
    <property type="entry name" value="DNA_helicase_Holl-junc_RuvA_I"/>
</dbReference>
<dbReference type="InterPro" id="IPR003583">
    <property type="entry name" value="Hlx-hairpin-Hlx_DNA-bd_motif"/>
</dbReference>
<dbReference type="InterPro" id="IPR012340">
    <property type="entry name" value="NA-bd_OB-fold"/>
</dbReference>
<dbReference type="InterPro" id="IPR000085">
    <property type="entry name" value="RuvA"/>
</dbReference>
<dbReference type="InterPro" id="IPR010994">
    <property type="entry name" value="RuvA_2-like"/>
</dbReference>
<dbReference type="InterPro" id="IPR011114">
    <property type="entry name" value="RuvA_C"/>
</dbReference>
<dbReference type="InterPro" id="IPR036267">
    <property type="entry name" value="RuvA_C_sf"/>
</dbReference>
<dbReference type="NCBIfam" id="TIGR00084">
    <property type="entry name" value="ruvA"/>
    <property type="match status" value="1"/>
</dbReference>
<dbReference type="Pfam" id="PF14520">
    <property type="entry name" value="HHH_5"/>
    <property type="match status" value="1"/>
</dbReference>
<dbReference type="Pfam" id="PF07499">
    <property type="entry name" value="RuvA_C"/>
    <property type="match status" value="1"/>
</dbReference>
<dbReference type="Pfam" id="PF01330">
    <property type="entry name" value="RuvA_N"/>
    <property type="match status" value="1"/>
</dbReference>
<dbReference type="SMART" id="SM00278">
    <property type="entry name" value="HhH1"/>
    <property type="match status" value="2"/>
</dbReference>
<dbReference type="SUPFAM" id="SSF46929">
    <property type="entry name" value="DNA helicase RuvA subunit, C-terminal domain"/>
    <property type="match status" value="1"/>
</dbReference>
<dbReference type="SUPFAM" id="SSF50249">
    <property type="entry name" value="Nucleic acid-binding proteins"/>
    <property type="match status" value="1"/>
</dbReference>
<dbReference type="SUPFAM" id="SSF47781">
    <property type="entry name" value="RuvA domain 2-like"/>
    <property type="match status" value="1"/>
</dbReference>